<accession>A7IH28</accession>
<gene>
    <name evidence="1" type="primary">atpH</name>
    <name type="ordered locus">Xaut_2077</name>
</gene>
<protein>
    <recommendedName>
        <fullName evidence="1">ATP synthase subunit delta</fullName>
    </recommendedName>
    <alternativeName>
        <fullName evidence="1">ATP synthase F(1) sector subunit delta</fullName>
    </alternativeName>
    <alternativeName>
        <fullName evidence="1">F-type ATPase subunit delta</fullName>
        <shortName evidence="1">F-ATPase subunit delta</shortName>
    </alternativeName>
</protein>
<sequence>MAAQGARHGLQVRERCGVADTIVSGMAGRYATALFELATEAGAVDSVKADLDRLSALIAESADLARLVKSPVFSAEEQLKAISAVLDQAGISGLAGNFVRRVAQNRRLFALPRMVADYASLVAAMRGETTAQVTVPAPLSDAHFFALKDALAQQTGKDVILDVTVDPSILGGLIVKLGSRMVDASLKTKLNSIRHAMKEVR</sequence>
<reference key="1">
    <citation type="submission" date="2007-07" db="EMBL/GenBank/DDBJ databases">
        <title>Complete sequence of chromosome of Xanthobacter autotrophicus Py2.</title>
        <authorList>
            <consortium name="US DOE Joint Genome Institute"/>
            <person name="Copeland A."/>
            <person name="Lucas S."/>
            <person name="Lapidus A."/>
            <person name="Barry K."/>
            <person name="Glavina del Rio T."/>
            <person name="Hammon N."/>
            <person name="Israni S."/>
            <person name="Dalin E."/>
            <person name="Tice H."/>
            <person name="Pitluck S."/>
            <person name="Sims D."/>
            <person name="Brettin T."/>
            <person name="Bruce D."/>
            <person name="Detter J.C."/>
            <person name="Han C."/>
            <person name="Tapia R."/>
            <person name="Brainard J."/>
            <person name="Schmutz J."/>
            <person name="Larimer F."/>
            <person name="Land M."/>
            <person name="Hauser L."/>
            <person name="Kyrpides N."/>
            <person name="Kim E."/>
            <person name="Ensigns S.A."/>
            <person name="Richardson P."/>
        </authorList>
    </citation>
    <scope>NUCLEOTIDE SEQUENCE [LARGE SCALE GENOMIC DNA]</scope>
    <source>
        <strain>ATCC BAA-1158 / Py2</strain>
    </source>
</reference>
<organism>
    <name type="scientific">Xanthobacter autotrophicus (strain ATCC BAA-1158 / Py2)</name>
    <dbReference type="NCBI Taxonomy" id="78245"/>
    <lineage>
        <taxon>Bacteria</taxon>
        <taxon>Pseudomonadati</taxon>
        <taxon>Pseudomonadota</taxon>
        <taxon>Alphaproteobacteria</taxon>
        <taxon>Hyphomicrobiales</taxon>
        <taxon>Xanthobacteraceae</taxon>
        <taxon>Xanthobacter</taxon>
    </lineage>
</organism>
<comment type="function">
    <text evidence="1">F(1)F(0) ATP synthase produces ATP from ADP in the presence of a proton or sodium gradient. F-type ATPases consist of two structural domains, F(1) containing the extramembraneous catalytic core and F(0) containing the membrane proton channel, linked together by a central stalk and a peripheral stalk. During catalysis, ATP synthesis in the catalytic domain of F(1) is coupled via a rotary mechanism of the central stalk subunits to proton translocation.</text>
</comment>
<comment type="function">
    <text evidence="1">This protein is part of the stalk that links CF(0) to CF(1). It either transmits conformational changes from CF(0) to CF(1) or is implicated in proton conduction.</text>
</comment>
<comment type="subunit">
    <text evidence="1">F-type ATPases have 2 components, F(1) - the catalytic core - and F(0) - the membrane proton channel. F(1) has five subunits: alpha(3), beta(3), gamma(1), delta(1), epsilon(1). F(0) has three main subunits: a(1), b(2) and c(10-14). The alpha and beta chains form an alternating ring which encloses part of the gamma chain. F(1) is attached to F(0) by a central stalk formed by the gamma and epsilon chains, while a peripheral stalk is formed by the delta and b chains.</text>
</comment>
<comment type="subcellular location">
    <subcellularLocation>
        <location evidence="1">Cell inner membrane</location>
        <topology evidence="1">Peripheral membrane protein</topology>
    </subcellularLocation>
</comment>
<comment type="similarity">
    <text evidence="1">Belongs to the ATPase delta chain family.</text>
</comment>
<keyword id="KW-0066">ATP synthesis</keyword>
<keyword id="KW-0997">Cell inner membrane</keyword>
<keyword id="KW-1003">Cell membrane</keyword>
<keyword id="KW-0139">CF(1)</keyword>
<keyword id="KW-0375">Hydrogen ion transport</keyword>
<keyword id="KW-0406">Ion transport</keyword>
<keyword id="KW-0472">Membrane</keyword>
<keyword id="KW-1185">Reference proteome</keyword>
<keyword id="KW-0813">Transport</keyword>
<feature type="chain" id="PRO_0000371195" description="ATP synthase subunit delta">
    <location>
        <begin position="1"/>
        <end position="201"/>
    </location>
</feature>
<name>ATPD_XANP2</name>
<dbReference type="EMBL" id="CP000781">
    <property type="protein sequence ID" value="ABS67321.1"/>
    <property type="molecule type" value="Genomic_DNA"/>
</dbReference>
<dbReference type="SMR" id="A7IH28"/>
<dbReference type="STRING" id="78245.Xaut_2077"/>
<dbReference type="KEGG" id="xau:Xaut_2077"/>
<dbReference type="eggNOG" id="COG0712">
    <property type="taxonomic scope" value="Bacteria"/>
</dbReference>
<dbReference type="HOGENOM" id="CLU_085114_0_1_5"/>
<dbReference type="OrthoDB" id="9796185at2"/>
<dbReference type="PhylomeDB" id="A7IH28"/>
<dbReference type="Proteomes" id="UP000002417">
    <property type="component" value="Chromosome"/>
</dbReference>
<dbReference type="GO" id="GO:0005886">
    <property type="term" value="C:plasma membrane"/>
    <property type="evidence" value="ECO:0007669"/>
    <property type="project" value="UniProtKB-SubCell"/>
</dbReference>
<dbReference type="GO" id="GO:0045259">
    <property type="term" value="C:proton-transporting ATP synthase complex"/>
    <property type="evidence" value="ECO:0007669"/>
    <property type="project" value="UniProtKB-KW"/>
</dbReference>
<dbReference type="GO" id="GO:0046933">
    <property type="term" value="F:proton-transporting ATP synthase activity, rotational mechanism"/>
    <property type="evidence" value="ECO:0007669"/>
    <property type="project" value="UniProtKB-UniRule"/>
</dbReference>
<dbReference type="Gene3D" id="1.10.520.20">
    <property type="entry name" value="N-terminal domain of the delta subunit of the F1F0-ATP synthase"/>
    <property type="match status" value="1"/>
</dbReference>
<dbReference type="HAMAP" id="MF_01416">
    <property type="entry name" value="ATP_synth_delta_bact"/>
    <property type="match status" value="1"/>
</dbReference>
<dbReference type="InterPro" id="IPR026015">
    <property type="entry name" value="ATP_synth_OSCP/delta_N_sf"/>
</dbReference>
<dbReference type="InterPro" id="IPR020781">
    <property type="entry name" value="ATPase_OSCP/d_CS"/>
</dbReference>
<dbReference type="InterPro" id="IPR000711">
    <property type="entry name" value="ATPase_OSCP/dsu"/>
</dbReference>
<dbReference type="NCBIfam" id="TIGR01145">
    <property type="entry name" value="ATP_synt_delta"/>
    <property type="match status" value="1"/>
</dbReference>
<dbReference type="NCBIfam" id="NF004406">
    <property type="entry name" value="PRK05758.3-2"/>
    <property type="match status" value="1"/>
</dbReference>
<dbReference type="PANTHER" id="PTHR11910">
    <property type="entry name" value="ATP SYNTHASE DELTA CHAIN"/>
    <property type="match status" value="1"/>
</dbReference>
<dbReference type="Pfam" id="PF00213">
    <property type="entry name" value="OSCP"/>
    <property type="match status" value="1"/>
</dbReference>
<dbReference type="PRINTS" id="PR00125">
    <property type="entry name" value="ATPASEDELTA"/>
</dbReference>
<dbReference type="SUPFAM" id="SSF47928">
    <property type="entry name" value="N-terminal domain of the delta subunit of the F1F0-ATP synthase"/>
    <property type="match status" value="1"/>
</dbReference>
<dbReference type="PROSITE" id="PS00389">
    <property type="entry name" value="ATPASE_DELTA"/>
    <property type="match status" value="1"/>
</dbReference>
<evidence type="ECO:0000255" key="1">
    <source>
        <dbReference type="HAMAP-Rule" id="MF_01416"/>
    </source>
</evidence>
<proteinExistence type="inferred from homology"/>